<feature type="chain" id="PRO_0000098952" description="Tryptophan synthase beta chain">
    <location>
        <begin position="1"/>
        <end position="414"/>
    </location>
</feature>
<feature type="modified residue" description="N6-(pyridoxal phosphate)lysine" evidence="1">
    <location>
        <position position="105"/>
    </location>
</feature>
<organism>
    <name type="scientific">Gloeobacter violaceus (strain ATCC 29082 / PCC 7421)</name>
    <dbReference type="NCBI Taxonomy" id="251221"/>
    <lineage>
        <taxon>Bacteria</taxon>
        <taxon>Bacillati</taxon>
        <taxon>Cyanobacteriota</taxon>
        <taxon>Cyanophyceae</taxon>
        <taxon>Gloeobacterales</taxon>
        <taxon>Gloeobacteraceae</taxon>
        <taxon>Gloeobacter</taxon>
    </lineage>
</organism>
<accession>Q7NGX9</accession>
<keyword id="KW-0028">Amino-acid biosynthesis</keyword>
<keyword id="KW-0057">Aromatic amino acid biosynthesis</keyword>
<keyword id="KW-0456">Lyase</keyword>
<keyword id="KW-0663">Pyridoxal phosphate</keyword>
<keyword id="KW-1185">Reference proteome</keyword>
<keyword id="KW-0822">Tryptophan biosynthesis</keyword>
<protein>
    <recommendedName>
        <fullName evidence="1">Tryptophan synthase beta chain</fullName>
        <ecNumber evidence="1">4.2.1.20</ecNumber>
    </recommendedName>
</protein>
<proteinExistence type="inferred from homology"/>
<gene>
    <name evidence="1" type="primary">trpB</name>
    <name type="ordered locus">glr2758</name>
</gene>
<evidence type="ECO:0000255" key="1">
    <source>
        <dbReference type="HAMAP-Rule" id="MF_00133"/>
    </source>
</evidence>
<dbReference type="EC" id="4.2.1.20" evidence="1"/>
<dbReference type="EMBL" id="BA000045">
    <property type="protein sequence ID" value="BAC90699.1"/>
    <property type="molecule type" value="Genomic_DNA"/>
</dbReference>
<dbReference type="RefSeq" id="NP_925704.1">
    <property type="nucleotide sequence ID" value="NC_005125.1"/>
</dbReference>
<dbReference type="RefSeq" id="WP_011142752.1">
    <property type="nucleotide sequence ID" value="NC_005125.1"/>
</dbReference>
<dbReference type="SMR" id="Q7NGX9"/>
<dbReference type="FunCoup" id="Q7NGX9">
    <property type="interactions" value="276"/>
</dbReference>
<dbReference type="STRING" id="251221.gene:10760261"/>
<dbReference type="EnsemblBacteria" id="BAC90699">
    <property type="protein sequence ID" value="BAC90699"/>
    <property type="gene ID" value="BAC90699"/>
</dbReference>
<dbReference type="KEGG" id="gvi:glr2758"/>
<dbReference type="PATRIC" id="fig|251221.4.peg.2785"/>
<dbReference type="eggNOG" id="COG0133">
    <property type="taxonomic scope" value="Bacteria"/>
</dbReference>
<dbReference type="HOGENOM" id="CLU_016734_3_1_3"/>
<dbReference type="InParanoid" id="Q7NGX9"/>
<dbReference type="OrthoDB" id="9766131at2"/>
<dbReference type="PhylomeDB" id="Q7NGX9"/>
<dbReference type="UniPathway" id="UPA00035">
    <property type="reaction ID" value="UER00044"/>
</dbReference>
<dbReference type="Proteomes" id="UP000000557">
    <property type="component" value="Chromosome"/>
</dbReference>
<dbReference type="GO" id="GO:0005737">
    <property type="term" value="C:cytoplasm"/>
    <property type="evidence" value="ECO:0000318"/>
    <property type="project" value="GO_Central"/>
</dbReference>
<dbReference type="GO" id="GO:0004834">
    <property type="term" value="F:tryptophan synthase activity"/>
    <property type="evidence" value="ECO:0007669"/>
    <property type="project" value="UniProtKB-UniRule"/>
</dbReference>
<dbReference type="GO" id="GO:0000162">
    <property type="term" value="P:L-tryptophan biosynthetic process"/>
    <property type="evidence" value="ECO:0000318"/>
    <property type="project" value="GO_Central"/>
</dbReference>
<dbReference type="CDD" id="cd06446">
    <property type="entry name" value="Trp-synth_B"/>
    <property type="match status" value="1"/>
</dbReference>
<dbReference type="FunFam" id="3.40.50.1100:FF:000001">
    <property type="entry name" value="Tryptophan synthase beta chain"/>
    <property type="match status" value="1"/>
</dbReference>
<dbReference type="FunFam" id="3.40.50.1100:FF:000004">
    <property type="entry name" value="Tryptophan synthase beta chain"/>
    <property type="match status" value="1"/>
</dbReference>
<dbReference type="Gene3D" id="3.40.50.1100">
    <property type="match status" value="2"/>
</dbReference>
<dbReference type="HAMAP" id="MF_00133">
    <property type="entry name" value="Trp_synth_beta"/>
    <property type="match status" value="1"/>
</dbReference>
<dbReference type="InterPro" id="IPR006653">
    <property type="entry name" value="Trp_synth_b_CS"/>
</dbReference>
<dbReference type="InterPro" id="IPR006654">
    <property type="entry name" value="Trp_synth_beta"/>
</dbReference>
<dbReference type="InterPro" id="IPR023026">
    <property type="entry name" value="Trp_synth_beta/beta-like"/>
</dbReference>
<dbReference type="InterPro" id="IPR001926">
    <property type="entry name" value="TrpB-like_PALP"/>
</dbReference>
<dbReference type="InterPro" id="IPR036052">
    <property type="entry name" value="TrpB-like_PALP_sf"/>
</dbReference>
<dbReference type="NCBIfam" id="TIGR00263">
    <property type="entry name" value="trpB"/>
    <property type="match status" value="1"/>
</dbReference>
<dbReference type="PANTHER" id="PTHR48077:SF3">
    <property type="entry name" value="TRYPTOPHAN SYNTHASE"/>
    <property type="match status" value="1"/>
</dbReference>
<dbReference type="PANTHER" id="PTHR48077">
    <property type="entry name" value="TRYPTOPHAN SYNTHASE-RELATED"/>
    <property type="match status" value="1"/>
</dbReference>
<dbReference type="Pfam" id="PF00291">
    <property type="entry name" value="PALP"/>
    <property type="match status" value="1"/>
</dbReference>
<dbReference type="PIRSF" id="PIRSF001413">
    <property type="entry name" value="Trp_syn_beta"/>
    <property type="match status" value="1"/>
</dbReference>
<dbReference type="SUPFAM" id="SSF53686">
    <property type="entry name" value="Tryptophan synthase beta subunit-like PLP-dependent enzymes"/>
    <property type="match status" value="1"/>
</dbReference>
<dbReference type="PROSITE" id="PS00168">
    <property type="entry name" value="TRP_SYNTHASE_BETA"/>
    <property type="match status" value="1"/>
</dbReference>
<name>TRPB_GLOVI</name>
<reference key="1">
    <citation type="journal article" date="2003" name="DNA Res.">
        <title>Complete genome structure of Gloeobacter violaceus PCC 7421, a cyanobacterium that lacks thylakoids.</title>
        <authorList>
            <person name="Nakamura Y."/>
            <person name="Kaneko T."/>
            <person name="Sato S."/>
            <person name="Mimuro M."/>
            <person name="Miyashita H."/>
            <person name="Tsuchiya T."/>
            <person name="Sasamoto S."/>
            <person name="Watanabe A."/>
            <person name="Kawashima K."/>
            <person name="Kishida Y."/>
            <person name="Kiyokawa C."/>
            <person name="Kohara M."/>
            <person name="Matsumoto M."/>
            <person name="Matsuno A."/>
            <person name="Nakazaki N."/>
            <person name="Shimpo S."/>
            <person name="Takeuchi C."/>
            <person name="Yamada M."/>
            <person name="Tabata S."/>
        </authorList>
    </citation>
    <scope>NUCLEOTIDE SEQUENCE [LARGE SCALE GENOMIC DNA]</scope>
    <source>
        <strain>ATCC 29082 / PCC 7421</strain>
    </source>
</reference>
<comment type="function">
    <text evidence="1">The beta subunit is responsible for the synthesis of L-tryptophan from indole and L-serine.</text>
</comment>
<comment type="catalytic activity">
    <reaction evidence="1">
        <text>(1S,2R)-1-C-(indol-3-yl)glycerol 3-phosphate + L-serine = D-glyceraldehyde 3-phosphate + L-tryptophan + H2O</text>
        <dbReference type="Rhea" id="RHEA:10532"/>
        <dbReference type="ChEBI" id="CHEBI:15377"/>
        <dbReference type="ChEBI" id="CHEBI:33384"/>
        <dbReference type="ChEBI" id="CHEBI:57912"/>
        <dbReference type="ChEBI" id="CHEBI:58866"/>
        <dbReference type="ChEBI" id="CHEBI:59776"/>
        <dbReference type="EC" id="4.2.1.20"/>
    </reaction>
</comment>
<comment type="cofactor">
    <cofactor evidence="1">
        <name>pyridoxal 5'-phosphate</name>
        <dbReference type="ChEBI" id="CHEBI:597326"/>
    </cofactor>
</comment>
<comment type="pathway">
    <text evidence="1">Amino-acid biosynthesis; L-tryptophan biosynthesis; L-tryptophan from chorismate: step 5/5.</text>
</comment>
<comment type="subunit">
    <text evidence="1">Tetramer of two alpha and two beta chains.</text>
</comment>
<comment type="similarity">
    <text evidence="1">Belongs to the TrpB family.</text>
</comment>
<sequence>MSFTIQTVTFTAPQPLGALPDSRGRFGRFGGQYVPETLMSALAQLEAAFNQYRHDPQFLAEFAGHLRDFVGRPTPLYFAERLTAHWGGGRIFLKREDLNHTGAHKINNALGQALLALRMGKRRIIAETGAGQHGVATATVCARFGLECIIYMGVHDIERQKLNVYRMKLLGAEVRPVAAGTGTLKDATSEAIRDWVTHVETTHYILGSAAGPHPYPLMVREFQAVIGRETRVQCLERLGRLPDVLIACVGGGSNAIGLFHDFLDERAVRLVGIEAAGEGIETGKHAATLTAGRAGVLHGAMSYVLQDEQGQVQEAHSLSAGLDYPGVGPEHSYLKDIGRAEYYSVTDSEALAALSLVCSTEGIIPALETAHAFAYLGILASQLHSEQIVVLNCSGRGDKDMGTVARAMGWGKEE</sequence>